<keyword id="KW-0413">Isomerase</keyword>
<keyword id="KW-1185">Reference proteome</keyword>
<keyword id="KW-0694">RNA-binding</keyword>
<keyword id="KW-0698">rRNA processing</keyword>
<dbReference type="EC" id="5.4.99.22"/>
<dbReference type="EMBL" id="BA000003">
    <property type="protein sequence ID" value="BAB12992.1"/>
    <property type="molecule type" value="Genomic_DNA"/>
</dbReference>
<dbReference type="RefSeq" id="NP_240106.1">
    <property type="nucleotide sequence ID" value="NC_002528.1"/>
</dbReference>
<dbReference type="RefSeq" id="WP_010896044.1">
    <property type="nucleotide sequence ID" value="NC_002528.1"/>
</dbReference>
<dbReference type="SMR" id="P57369"/>
<dbReference type="STRING" id="563178.BUAP5A_277"/>
<dbReference type="EnsemblBacteria" id="BAB12992">
    <property type="protein sequence ID" value="BAB12992"/>
    <property type="gene ID" value="BAB12992"/>
</dbReference>
<dbReference type="KEGG" id="buc:BU282"/>
<dbReference type="PATRIC" id="fig|107806.10.peg.292"/>
<dbReference type="eggNOG" id="COG1187">
    <property type="taxonomic scope" value="Bacteria"/>
</dbReference>
<dbReference type="HOGENOM" id="CLU_024979_1_1_6"/>
<dbReference type="Proteomes" id="UP000001806">
    <property type="component" value="Chromosome"/>
</dbReference>
<dbReference type="GO" id="GO:0160139">
    <property type="term" value="F:23S rRNA pseudouridine(2605) synthase activity"/>
    <property type="evidence" value="ECO:0007669"/>
    <property type="project" value="UniProtKB-EC"/>
</dbReference>
<dbReference type="GO" id="GO:0003723">
    <property type="term" value="F:RNA binding"/>
    <property type="evidence" value="ECO:0007669"/>
    <property type="project" value="UniProtKB-KW"/>
</dbReference>
<dbReference type="GO" id="GO:0001522">
    <property type="term" value="P:pseudouridine synthesis"/>
    <property type="evidence" value="ECO:0007669"/>
    <property type="project" value="InterPro"/>
</dbReference>
<dbReference type="GO" id="GO:0006364">
    <property type="term" value="P:rRNA processing"/>
    <property type="evidence" value="ECO:0007669"/>
    <property type="project" value="UniProtKB-KW"/>
</dbReference>
<dbReference type="CDD" id="cd02556">
    <property type="entry name" value="PseudoU_synth_RluB"/>
    <property type="match status" value="1"/>
</dbReference>
<dbReference type="CDD" id="cd00165">
    <property type="entry name" value="S4"/>
    <property type="match status" value="1"/>
</dbReference>
<dbReference type="Gene3D" id="3.30.70.1560">
    <property type="entry name" value="Alpha-L RNA-binding motif"/>
    <property type="match status" value="1"/>
</dbReference>
<dbReference type="Gene3D" id="3.30.70.580">
    <property type="entry name" value="Pseudouridine synthase I, catalytic domain, N-terminal subdomain"/>
    <property type="match status" value="1"/>
</dbReference>
<dbReference type="Gene3D" id="3.10.290.10">
    <property type="entry name" value="RNA-binding S4 domain"/>
    <property type="match status" value="1"/>
</dbReference>
<dbReference type="InterPro" id="IPR042092">
    <property type="entry name" value="PsdUridine_s_RsuA/RluB/E/F_cat"/>
</dbReference>
<dbReference type="InterPro" id="IPR020103">
    <property type="entry name" value="PsdUridine_synth_cat_dom_sf"/>
</dbReference>
<dbReference type="InterPro" id="IPR006145">
    <property type="entry name" value="PsdUridine_synth_RsuA/RluA"/>
</dbReference>
<dbReference type="InterPro" id="IPR000748">
    <property type="entry name" value="PsdUridine_synth_RsuA/RluB/E/F"/>
</dbReference>
<dbReference type="InterPro" id="IPR018496">
    <property type="entry name" value="PsdUridine_synth_RsuA/RluB_CS"/>
</dbReference>
<dbReference type="InterPro" id="IPR050343">
    <property type="entry name" value="RsuA_PseudoU_synthase"/>
</dbReference>
<dbReference type="InterPro" id="IPR036986">
    <property type="entry name" value="S4_RNA-bd_sf"/>
</dbReference>
<dbReference type="InterPro" id="IPR020094">
    <property type="entry name" value="TruA/RsuA/RluB/E/F_N"/>
</dbReference>
<dbReference type="NCBIfam" id="NF007976">
    <property type="entry name" value="PRK10700.1"/>
    <property type="match status" value="1"/>
</dbReference>
<dbReference type="NCBIfam" id="TIGR00093">
    <property type="entry name" value="pseudouridine synthase"/>
    <property type="match status" value="1"/>
</dbReference>
<dbReference type="PANTHER" id="PTHR47683">
    <property type="entry name" value="PSEUDOURIDINE SYNTHASE FAMILY PROTEIN-RELATED"/>
    <property type="match status" value="1"/>
</dbReference>
<dbReference type="PANTHER" id="PTHR47683:SF3">
    <property type="entry name" value="RIBOSOMAL LARGE SUBUNIT PSEUDOURIDINE SYNTHASE B"/>
    <property type="match status" value="1"/>
</dbReference>
<dbReference type="Pfam" id="PF00849">
    <property type="entry name" value="PseudoU_synth_2"/>
    <property type="match status" value="1"/>
</dbReference>
<dbReference type="SUPFAM" id="SSF55174">
    <property type="entry name" value="Alpha-L RNA-binding motif"/>
    <property type="match status" value="1"/>
</dbReference>
<dbReference type="SUPFAM" id="SSF55120">
    <property type="entry name" value="Pseudouridine synthase"/>
    <property type="match status" value="1"/>
</dbReference>
<dbReference type="PROSITE" id="PS01149">
    <property type="entry name" value="PSI_RSU"/>
    <property type="match status" value="1"/>
</dbReference>
<dbReference type="PROSITE" id="PS50889">
    <property type="entry name" value="S4"/>
    <property type="match status" value="1"/>
</dbReference>
<evidence type="ECO:0000250" key="1"/>
<evidence type="ECO:0000255" key="2">
    <source>
        <dbReference type="PROSITE-ProRule" id="PRU00182"/>
    </source>
</evidence>
<evidence type="ECO:0000305" key="3"/>
<organism>
    <name type="scientific">Buchnera aphidicola subsp. Acyrthosiphon pisum (strain APS)</name>
    <name type="common">Acyrthosiphon pisum symbiotic bacterium</name>
    <dbReference type="NCBI Taxonomy" id="107806"/>
    <lineage>
        <taxon>Bacteria</taxon>
        <taxon>Pseudomonadati</taxon>
        <taxon>Pseudomonadota</taxon>
        <taxon>Gammaproteobacteria</taxon>
        <taxon>Enterobacterales</taxon>
        <taxon>Erwiniaceae</taxon>
        <taxon>Buchnera</taxon>
    </lineage>
</organism>
<proteinExistence type="inferred from homology"/>
<name>RLUB_BUCAI</name>
<accession>P57369</accession>
<comment type="function">
    <text evidence="1">Responsible for synthesis of pseudouridine from uracil-2605 in 23S ribosomal RNA.</text>
</comment>
<comment type="catalytic activity">
    <reaction>
        <text>uridine(2605) in 23S rRNA = pseudouridine(2605) in 23S rRNA</text>
        <dbReference type="Rhea" id="RHEA:42520"/>
        <dbReference type="Rhea" id="RHEA-COMP:10095"/>
        <dbReference type="Rhea" id="RHEA-COMP:10096"/>
        <dbReference type="ChEBI" id="CHEBI:65314"/>
        <dbReference type="ChEBI" id="CHEBI:65315"/>
        <dbReference type="EC" id="5.4.99.22"/>
    </reaction>
</comment>
<comment type="similarity">
    <text evidence="3">Belongs to the pseudouridine synthase RsuA family.</text>
</comment>
<protein>
    <recommendedName>
        <fullName>Ribosomal large subunit pseudouridine synthase B</fullName>
        <ecNumber>5.4.99.22</ecNumber>
    </recommendedName>
    <alternativeName>
        <fullName>23S rRNA pseudouridine(2605) synthase</fullName>
    </alternativeName>
    <alternativeName>
        <fullName>rRNA pseudouridylate synthase B</fullName>
    </alternativeName>
    <alternativeName>
        <fullName>rRNA-uridine isomerase B</fullName>
    </alternativeName>
</protein>
<sequence>MSEKIQKILSHLGYGSRRNIENMIKFGDISINGKKIVIGQRLNNKNIEVITIKGETVSIKKTDFKTKIIIYNKPEGEICTRNDYKKRPIVFDKLPLLNIHRWISIGRLDINTRGLLLFTNNGNLANELMHPSNKIEREYYIRVFGKINKNTMNILKNGVKIKDGNAAFKSIQTIDHACSKKNKWFKGVLCEGRNREIRSMWQAVQCQVSRLIRIRYGNIFLPKNLKLGDWSELSSESVNNLSNLVSLKDS</sequence>
<feature type="chain" id="PRO_0000099980" description="Ribosomal large subunit pseudouridine synthase B">
    <location>
        <begin position="1"/>
        <end position="250"/>
    </location>
</feature>
<feature type="domain" description="S4 RNA-binding" evidence="2">
    <location>
        <begin position="3"/>
        <end position="73"/>
    </location>
</feature>
<feature type="active site" description="Nucleophile" evidence="1">
    <location>
        <position position="109"/>
    </location>
</feature>
<reference key="1">
    <citation type="journal article" date="2000" name="Nature">
        <title>Genome sequence of the endocellular bacterial symbiont of aphids Buchnera sp. APS.</title>
        <authorList>
            <person name="Shigenobu S."/>
            <person name="Watanabe H."/>
            <person name="Hattori M."/>
            <person name="Sakaki Y."/>
            <person name="Ishikawa H."/>
        </authorList>
    </citation>
    <scope>NUCLEOTIDE SEQUENCE [LARGE SCALE GENOMIC DNA]</scope>
    <source>
        <strain>APS</strain>
    </source>
</reference>
<gene>
    <name type="primary">rluB</name>
    <name type="ordered locus">BU282</name>
</gene>